<organism>
    <name type="scientific">Shigella boydii serotype 18 (strain CDC 3083-94 / BS512)</name>
    <dbReference type="NCBI Taxonomy" id="344609"/>
    <lineage>
        <taxon>Bacteria</taxon>
        <taxon>Pseudomonadati</taxon>
        <taxon>Pseudomonadota</taxon>
        <taxon>Gammaproteobacteria</taxon>
        <taxon>Enterobacterales</taxon>
        <taxon>Enterobacteriaceae</taxon>
        <taxon>Shigella</taxon>
    </lineage>
</organism>
<gene>
    <name evidence="1" type="primary">rplK</name>
    <name type="ordered locus">SbBS512_E4471</name>
</gene>
<protein>
    <recommendedName>
        <fullName evidence="1">Large ribosomal subunit protein uL11</fullName>
    </recommendedName>
    <alternativeName>
        <fullName evidence="2">50S ribosomal protein L11</fullName>
    </alternativeName>
</protein>
<name>RL11_SHIB3</name>
<evidence type="ECO:0000255" key="1">
    <source>
        <dbReference type="HAMAP-Rule" id="MF_00736"/>
    </source>
</evidence>
<evidence type="ECO:0000305" key="2"/>
<sequence length="142" mass="14875">MAKKVQAYVKLQVAAGMANPSPPVGPALGQQGVNIMEFCKAFNAKTDSIEKGLPIPVVITVYADRSFTFVTKTPPAAVLLKKAAGIKSGSGKPNKDKVGKISRAQLQEIAQTKAADMTGADIEAMTRSIEGTARSMGLVVED</sequence>
<accession>B2TWG9</accession>
<feature type="chain" id="PRO_1000195716" description="Large ribosomal subunit protein uL11">
    <location>
        <begin position="1"/>
        <end position="142"/>
    </location>
</feature>
<keyword id="KW-0488">Methylation</keyword>
<keyword id="KW-1185">Reference proteome</keyword>
<keyword id="KW-0687">Ribonucleoprotein</keyword>
<keyword id="KW-0689">Ribosomal protein</keyword>
<keyword id="KW-0694">RNA-binding</keyword>
<keyword id="KW-0699">rRNA-binding</keyword>
<comment type="function">
    <text evidence="1">Forms part of the ribosomal stalk which helps the ribosome interact with GTP-bound translation factors.</text>
</comment>
<comment type="subunit">
    <text evidence="1">Part of the ribosomal stalk of the 50S ribosomal subunit. Interacts with L10 and the large rRNA to form the base of the stalk. L10 forms an elongated spine to which L12 dimers bind in a sequential fashion forming a multimeric L10(L12)X complex.</text>
</comment>
<comment type="PTM">
    <text evidence="1">One or more lysine residues are methylated.</text>
</comment>
<comment type="similarity">
    <text evidence="1">Belongs to the universal ribosomal protein uL11 family.</text>
</comment>
<dbReference type="EMBL" id="CP001063">
    <property type="protein sequence ID" value="ACD08389.1"/>
    <property type="molecule type" value="Genomic_DNA"/>
</dbReference>
<dbReference type="RefSeq" id="WP_001085926.1">
    <property type="nucleotide sequence ID" value="NC_010658.1"/>
</dbReference>
<dbReference type="SMR" id="B2TWG9"/>
<dbReference type="STRING" id="344609.SbBS512_E4471"/>
<dbReference type="GeneID" id="93777911"/>
<dbReference type="KEGG" id="sbc:SbBS512_E4471"/>
<dbReference type="HOGENOM" id="CLU_074237_2_0_6"/>
<dbReference type="Proteomes" id="UP000001030">
    <property type="component" value="Chromosome"/>
</dbReference>
<dbReference type="GO" id="GO:0022625">
    <property type="term" value="C:cytosolic large ribosomal subunit"/>
    <property type="evidence" value="ECO:0007669"/>
    <property type="project" value="TreeGrafter"/>
</dbReference>
<dbReference type="GO" id="GO:0070180">
    <property type="term" value="F:large ribosomal subunit rRNA binding"/>
    <property type="evidence" value="ECO:0007669"/>
    <property type="project" value="UniProtKB-UniRule"/>
</dbReference>
<dbReference type="GO" id="GO:0003735">
    <property type="term" value="F:structural constituent of ribosome"/>
    <property type="evidence" value="ECO:0007669"/>
    <property type="project" value="InterPro"/>
</dbReference>
<dbReference type="GO" id="GO:0006412">
    <property type="term" value="P:translation"/>
    <property type="evidence" value="ECO:0007669"/>
    <property type="project" value="UniProtKB-UniRule"/>
</dbReference>
<dbReference type="CDD" id="cd00349">
    <property type="entry name" value="Ribosomal_L11"/>
    <property type="match status" value="1"/>
</dbReference>
<dbReference type="FunFam" id="1.10.10.250:FF:000001">
    <property type="entry name" value="50S ribosomal protein L11"/>
    <property type="match status" value="1"/>
</dbReference>
<dbReference type="FunFam" id="3.30.1550.10:FF:000001">
    <property type="entry name" value="50S ribosomal protein L11"/>
    <property type="match status" value="1"/>
</dbReference>
<dbReference type="Gene3D" id="1.10.10.250">
    <property type="entry name" value="Ribosomal protein L11, C-terminal domain"/>
    <property type="match status" value="1"/>
</dbReference>
<dbReference type="Gene3D" id="3.30.1550.10">
    <property type="entry name" value="Ribosomal protein L11/L12, N-terminal domain"/>
    <property type="match status" value="1"/>
</dbReference>
<dbReference type="HAMAP" id="MF_00736">
    <property type="entry name" value="Ribosomal_uL11"/>
    <property type="match status" value="1"/>
</dbReference>
<dbReference type="InterPro" id="IPR000911">
    <property type="entry name" value="Ribosomal_uL11"/>
</dbReference>
<dbReference type="InterPro" id="IPR006519">
    <property type="entry name" value="Ribosomal_uL11_bac-typ"/>
</dbReference>
<dbReference type="InterPro" id="IPR020783">
    <property type="entry name" value="Ribosomal_uL11_C"/>
</dbReference>
<dbReference type="InterPro" id="IPR036769">
    <property type="entry name" value="Ribosomal_uL11_C_sf"/>
</dbReference>
<dbReference type="InterPro" id="IPR020785">
    <property type="entry name" value="Ribosomal_uL11_CS"/>
</dbReference>
<dbReference type="InterPro" id="IPR020784">
    <property type="entry name" value="Ribosomal_uL11_N"/>
</dbReference>
<dbReference type="InterPro" id="IPR036796">
    <property type="entry name" value="Ribosomal_uL11_N_sf"/>
</dbReference>
<dbReference type="NCBIfam" id="TIGR01632">
    <property type="entry name" value="L11_bact"/>
    <property type="match status" value="1"/>
</dbReference>
<dbReference type="PANTHER" id="PTHR11661">
    <property type="entry name" value="60S RIBOSOMAL PROTEIN L12"/>
    <property type="match status" value="1"/>
</dbReference>
<dbReference type="PANTHER" id="PTHR11661:SF1">
    <property type="entry name" value="LARGE RIBOSOMAL SUBUNIT PROTEIN UL11M"/>
    <property type="match status" value="1"/>
</dbReference>
<dbReference type="Pfam" id="PF00298">
    <property type="entry name" value="Ribosomal_L11"/>
    <property type="match status" value="1"/>
</dbReference>
<dbReference type="Pfam" id="PF03946">
    <property type="entry name" value="Ribosomal_L11_N"/>
    <property type="match status" value="1"/>
</dbReference>
<dbReference type="SMART" id="SM00649">
    <property type="entry name" value="RL11"/>
    <property type="match status" value="1"/>
</dbReference>
<dbReference type="SUPFAM" id="SSF54747">
    <property type="entry name" value="Ribosomal L11/L12e N-terminal domain"/>
    <property type="match status" value="1"/>
</dbReference>
<dbReference type="SUPFAM" id="SSF46906">
    <property type="entry name" value="Ribosomal protein L11, C-terminal domain"/>
    <property type="match status" value="1"/>
</dbReference>
<dbReference type="PROSITE" id="PS00359">
    <property type="entry name" value="RIBOSOMAL_L11"/>
    <property type="match status" value="1"/>
</dbReference>
<reference key="1">
    <citation type="submission" date="2008-05" db="EMBL/GenBank/DDBJ databases">
        <title>Complete sequence of Shigella boydii serotype 18 strain BS512.</title>
        <authorList>
            <person name="Rasko D.A."/>
            <person name="Rosovitz M."/>
            <person name="Maurelli A.T."/>
            <person name="Myers G."/>
            <person name="Seshadri R."/>
            <person name="Cer R."/>
            <person name="Jiang L."/>
            <person name="Ravel J."/>
            <person name="Sebastian Y."/>
        </authorList>
    </citation>
    <scope>NUCLEOTIDE SEQUENCE [LARGE SCALE GENOMIC DNA]</scope>
    <source>
        <strain>CDC 3083-94 / BS512</strain>
    </source>
</reference>
<proteinExistence type="inferred from homology"/>